<comment type="function">
    <text evidence="1">Catalyzes the reduction of FMN to FMNH2 which is used to reduce pyrimidine by RutA via the Rut pathway.</text>
</comment>
<comment type="catalytic activity">
    <reaction evidence="1">
        <text>FMNH2 + NAD(+) = FMN + NADH + 2 H(+)</text>
        <dbReference type="Rhea" id="RHEA:21620"/>
        <dbReference type="ChEBI" id="CHEBI:15378"/>
        <dbReference type="ChEBI" id="CHEBI:57540"/>
        <dbReference type="ChEBI" id="CHEBI:57618"/>
        <dbReference type="ChEBI" id="CHEBI:57945"/>
        <dbReference type="ChEBI" id="CHEBI:58210"/>
        <dbReference type="EC" id="1.5.1.42"/>
    </reaction>
</comment>
<comment type="induction">
    <text evidence="1">Up-regulated by the nitrogen regulatory protein C (NtrC also called GlnG) and repressed by RutR.</text>
</comment>
<comment type="similarity">
    <text evidence="1">Belongs to the non-flavoprotein flavin reductase family. RutF subfamily.</text>
</comment>
<protein>
    <recommendedName>
        <fullName evidence="1">FMN reductase (NADH) RutF</fullName>
        <ecNumber evidence="1">1.5.1.42</ecNumber>
    </recommendedName>
    <alternativeName>
        <fullName evidence="1">FMN reductase</fullName>
    </alternativeName>
    <alternativeName>
        <fullName evidence="1">NADH-flavin reductase RutF</fullName>
    </alternativeName>
    <alternativeName>
        <fullName evidence="1">NADH:flavin oxidoreductase</fullName>
    </alternativeName>
</protein>
<evidence type="ECO:0000255" key="1">
    <source>
        <dbReference type="HAMAP-Rule" id="MF_00833"/>
    </source>
</evidence>
<name>RUTF_ECO1A</name>
<gene>
    <name evidence="1" type="primary">rutF</name>
    <name type="ordered locus">ECO111_1196</name>
</gene>
<proteinExistence type="inferred from homology"/>
<organism>
    <name type="scientific">Escherichia coli O111:H- (strain 11128 / EHEC)</name>
    <dbReference type="NCBI Taxonomy" id="585396"/>
    <lineage>
        <taxon>Bacteria</taxon>
        <taxon>Pseudomonadati</taxon>
        <taxon>Pseudomonadota</taxon>
        <taxon>Gammaproteobacteria</taxon>
        <taxon>Enterobacterales</taxon>
        <taxon>Enterobacteriaceae</taxon>
        <taxon>Escherichia</taxon>
    </lineage>
</organism>
<dbReference type="EC" id="1.5.1.42" evidence="1"/>
<dbReference type="EMBL" id="AP010960">
    <property type="protein sequence ID" value="BAI35143.1"/>
    <property type="molecule type" value="Genomic_DNA"/>
</dbReference>
<dbReference type="RefSeq" id="WP_001028095.1">
    <property type="nucleotide sequence ID" value="NC_013364.1"/>
</dbReference>
<dbReference type="SMR" id="C8UMM3"/>
<dbReference type="GeneID" id="75171083"/>
<dbReference type="KEGG" id="eoi:ECO111_1196"/>
<dbReference type="HOGENOM" id="CLU_059021_2_2_6"/>
<dbReference type="GO" id="GO:0010181">
    <property type="term" value="F:FMN binding"/>
    <property type="evidence" value="ECO:0007669"/>
    <property type="project" value="InterPro"/>
</dbReference>
<dbReference type="GO" id="GO:0052874">
    <property type="term" value="F:FMN reductase (NADH) activity"/>
    <property type="evidence" value="ECO:0007669"/>
    <property type="project" value="UniProtKB-EC"/>
</dbReference>
<dbReference type="GO" id="GO:0008752">
    <property type="term" value="F:FMN reductase [NAD(P)H] activity"/>
    <property type="evidence" value="ECO:0007669"/>
    <property type="project" value="InterPro"/>
</dbReference>
<dbReference type="GO" id="GO:0042602">
    <property type="term" value="F:riboflavin reductase (NADPH) activity"/>
    <property type="evidence" value="ECO:0007669"/>
    <property type="project" value="UniProtKB-UniRule"/>
</dbReference>
<dbReference type="GO" id="GO:0019740">
    <property type="term" value="P:nitrogen utilization"/>
    <property type="evidence" value="ECO:0007669"/>
    <property type="project" value="UniProtKB-UniRule"/>
</dbReference>
<dbReference type="GO" id="GO:0006212">
    <property type="term" value="P:uracil catabolic process"/>
    <property type="evidence" value="ECO:0007669"/>
    <property type="project" value="UniProtKB-UniRule"/>
</dbReference>
<dbReference type="FunFam" id="2.30.110.10:FF:000002">
    <property type="entry name" value="FMN reductase (NADH) RutF"/>
    <property type="match status" value="1"/>
</dbReference>
<dbReference type="Gene3D" id="2.30.110.10">
    <property type="entry name" value="Electron Transport, Fmn-binding Protein, Chain A"/>
    <property type="match status" value="1"/>
</dbReference>
<dbReference type="HAMAP" id="MF_00833">
    <property type="entry name" value="RutF"/>
    <property type="match status" value="1"/>
</dbReference>
<dbReference type="InterPro" id="IPR002563">
    <property type="entry name" value="Flavin_Rdtase-like_dom"/>
</dbReference>
<dbReference type="InterPro" id="IPR050268">
    <property type="entry name" value="NADH-dep_flavin_reductase"/>
</dbReference>
<dbReference type="InterPro" id="IPR019917">
    <property type="entry name" value="RutF"/>
</dbReference>
<dbReference type="InterPro" id="IPR012349">
    <property type="entry name" value="Split_barrel_FMN-bd"/>
</dbReference>
<dbReference type="NCBIfam" id="TIGR03615">
    <property type="entry name" value="RutF"/>
    <property type="match status" value="1"/>
</dbReference>
<dbReference type="PANTHER" id="PTHR30466">
    <property type="entry name" value="FLAVIN REDUCTASE"/>
    <property type="match status" value="1"/>
</dbReference>
<dbReference type="PANTHER" id="PTHR30466:SF1">
    <property type="entry name" value="FMN REDUCTASE (NADH) RUTF"/>
    <property type="match status" value="1"/>
</dbReference>
<dbReference type="Pfam" id="PF01613">
    <property type="entry name" value="Flavin_Reduct"/>
    <property type="match status" value="1"/>
</dbReference>
<dbReference type="SMART" id="SM00903">
    <property type="entry name" value="Flavin_Reduct"/>
    <property type="match status" value="1"/>
</dbReference>
<dbReference type="SUPFAM" id="SSF50475">
    <property type="entry name" value="FMN-binding split barrel"/>
    <property type="match status" value="1"/>
</dbReference>
<keyword id="KW-0285">Flavoprotein</keyword>
<keyword id="KW-0288">FMN</keyword>
<keyword id="KW-0520">NAD</keyword>
<keyword id="KW-0560">Oxidoreductase</keyword>
<sequence>MNIVDQQTFRDAMSCMGAAVNIITTDGPAGRAGFTASAVCSVTDTPPTLLVCLNRGASVWPVFNENRTLCVNTLSAGQEPLSNLFGGKTPMEHRFAAARWQTGVTGCPQLEEALVSFDCRISQVVSVGTHDILFCAIEAIHRHATPYGLVWFDRSYHALMRPAC</sequence>
<reference key="1">
    <citation type="journal article" date="2009" name="Proc. Natl. Acad. Sci. U.S.A.">
        <title>Comparative genomics reveal the mechanism of the parallel evolution of O157 and non-O157 enterohemorrhagic Escherichia coli.</title>
        <authorList>
            <person name="Ogura Y."/>
            <person name="Ooka T."/>
            <person name="Iguchi A."/>
            <person name="Toh H."/>
            <person name="Asadulghani M."/>
            <person name="Oshima K."/>
            <person name="Kodama T."/>
            <person name="Abe H."/>
            <person name="Nakayama K."/>
            <person name="Kurokawa K."/>
            <person name="Tobe T."/>
            <person name="Hattori M."/>
            <person name="Hayashi T."/>
        </authorList>
    </citation>
    <scope>NUCLEOTIDE SEQUENCE [LARGE SCALE GENOMIC DNA]</scope>
    <source>
        <strain>11128 / EHEC</strain>
    </source>
</reference>
<feature type="chain" id="PRO_0000403009" description="FMN reductase (NADH) RutF">
    <location>
        <begin position="1"/>
        <end position="164"/>
    </location>
</feature>
<accession>C8UMM3</accession>